<sequence length="101" mass="11529">MIGKEVTLQDIVLELNELQPEVQPVDLFCEEELPSEQQETEEELPERTAYKVVTPCGCCKVKLRIFVNATQFAIRTFQNLLFEELQLLCPECRGNCKHGGS</sequence>
<gene>
    <name evidence="1" type="primary">E7</name>
</gene>
<organismHost>
    <name type="scientific">Homo sapiens</name>
    <name type="common">Human</name>
    <dbReference type="NCBI Taxonomy" id="9606"/>
</organismHost>
<evidence type="ECO:0000255" key="1">
    <source>
        <dbReference type="HAMAP-Rule" id="MF_04004"/>
    </source>
</evidence>
<keyword id="KW-0010">Activator</keyword>
<keyword id="KW-0238">DNA-binding</keyword>
<keyword id="KW-0244">Early protein</keyword>
<keyword id="KW-1078">G1/S host cell cycle checkpoint dysregulation by virus</keyword>
<keyword id="KW-1035">Host cytoplasm</keyword>
<keyword id="KW-1048">Host nucleus</keyword>
<keyword id="KW-0945">Host-virus interaction</keyword>
<keyword id="KW-1090">Inhibition of host innate immune response by virus</keyword>
<keyword id="KW-1114">Inhibition of host interferon signaling pathway by virus</keyword>
<keyword id="KW-0922">Interferon antiviral system evasion</keyword>
<keyword id="KW-0479">Metal-binding</keyword>
<keyword id="KW-1121">Modulation of host cell cycle by virus</keyword>
<keyword id="KW-0553">Oncogene</keyword>
<keyword id="KW-1185">Reference proteome</keyword>
<keyword id="KW-0804">Transcription</keyword>
<keyword id="KW-0805">Transcription regulation</keyword>
<keyword id="KW-0899">Viral immunoevasion</keyword>
<keyword id="KW-0862">Zinc</keyword>
<keyword id="KW-0863">Zinc-finger</keyword>
<organism>
    <name type="scientific">Human papillomavirus 21</name>
    <dbReference type="NCBI Taxonomy" id="31548"/>
    <lineage>
        <taxon>Viruses</taxon>
        <taxon>Monodnaviria</taxon>
        <taxon>Shotokuvirae</taxon>
        <taxon>Cossaviricota</taxon>
        <taxon>Papovaviricetes</taxon>
        <taxon>Zurhausenvirales</taxon>
        <taxon>Papillomaviridae</taxon>
        <taxon>Firstpapillomavirinae</taxon>
        <taxon>Betapapillomavirus</taxon>
        <taxon>Betapapillomavirus 1</taxon>
    </lineage>
</organism>
<dbReference type="EMBL" id="U31779">
    <property type="protein sequence ID" value="AAA79395.1"/>
    <property type="molecule type" value="Genomic_DNA"/>
</dbReference>
<dbReference type="SMR" id="P50779"/>
<dbReference type="Proteomes" id="UP000009165">
    <property type="component" value="Genome"/>
</dbReference>
<dbReference type="GO" id="GO:0030430">
    <property type="term" value="C:host cell cytoplasm"/>
    <property type="evidence" value="ECO:0007669"/>
    <property type="project" value="UniProtKB-SubCell"/>
</dbReference>
<dbReference type="GO" id="GO:0042025">
    <property type="term" value="C:host cell nucleus"/>
    <property type="evidence" value="ECO:0007669"/>
    <property type="project" value="UniProtKB-SubCell"/>
</dbReference>
<dbReference type="GO" id="GO:0003677">
    <property type="term" value="F:DNA binding"/>
    <property type="evidence" value="ECO:0007669"/>
    <property type="project" value="UniProtKB-UniRule"/>
</dbReference>
<dbReference type="GO" id="GO:0003700">
    <property type="term" value="F:DNA-binding transcription factor activity"/>
    <property type="evidence" value="ECO:0007669"/>
    <property type="project" value="UniProtKB-UniRule"/>
</dbReference>
<dbReference type="GO" id="GO:0019904">
    <property type="term" value="F:protein domain specific binding"/>
    <property type="evidence" value="ECO:0007669"/>
    <property type="project" value="UniProtKB-UniRule"/>
</dbReference>
<dbReference type="GO" id="GO:0008270">
    <property type="term" value="F:zinc ion binding"/>
    <property type="evidence" value="ECO:0007669"/>
    <property type="project" value="UniProtKB-KW"/>
</dbReference>
<dbReference type="GO" id="GO:0006351">
    <property type="term" value="P:DNA-templated transcription"/>
    <property type="evidence" value="ECO:0007669"/>
    <property type="project" value="UniProtKB-UniRule"/>
</dbReference>
<dbReference type="GO" id="GO:0039645">
    <property type="term" value="P:symbiont-mediated perturbation of host cell cycle G1/S transition checkpoint"/>
    <property type="evidence" value="ECO:0007669"/>
    <property type="project" value="UniProtKB-UniRule"/>
</dbReference>
<dbReference type="GO" id="GO:0052170">
    <property type="term" value="P:symbiont-mediated suppression of host innate immune response"/>
    <property type="evidence" value="ECO:0007669"/>
    <property type="project" value="UniProtKB-KW"/>
</dbReference>
<dbReference type="GO" id="GO:0039502">
    <property type="term" value="P:symbiont-mediated suppression of host type I interferon-mediated signaling pathway"/>
    <property type="evidence" value="ECO:0007669"/>
    <property type="project" value="UniProtKB-UniRule"/>
</dbReference>
<dbReference type="Gene3D" id="3.30.160.330">
    <property type="match status" value="1"/>
</dbReference>
<dbReference type="HAMAP" id="MF_04004">
    <property type="entry name" value="PPV_E7"/>
    <property type="match status" value="1"/>
</dbReference>
<dbReference type="InterPro" id="IPR000148">
    <property type="entry name" value="Papilloma_E7"/>
</dbReference>
<dbReference type="Pfam" id="PF00527">
    <property type="entry name" value="E7"/>
    <property type="match status" value="1"/>
</dbReference>
<dbReference type="PIRSF" id="PIRSF003407">
    <property type="entry name" value="Papvi_E7"/>
    <property type="match status" value="1"/>
</dbReference>
<dbReference type="SUPFAM" id="SSF161234">
    <property type="entry name" value="E7 C-terminal domain-like"/>
    <property type="match status" value="1"/>
</dbReference>
<feature type="chain" id="PRO_0000133419" description="Protein E7">
    <location>
        <begin position="1"/>
        <end position="101"/>
    </location>
</feature>
<feature type="zinc finger region" evidence="1">
    <location>
        <begin position="56"/>
        <end position="92"/>
    </location>
</feature>
<feature type="region of interest" description="E7 terminal domain" evidence="1">
    <location>
        <begin position="1"/>
        <end position="44"/>
    </location>
</feature>
<feature type="short sequence motif" description="LXCXE motif; interaction with host RB1 and TMEM173/STING" evidence="1">
    <location>
        <begin position="27"/>
        <end position="31"/>
    </location>
</feature>
<feature type="short sequence motif" description="Nuclear export signal" evidence="1">
    <location>
        <begin position="74"/>
        <end position="82"/>
    </location>
</feature>
<accession>P50779</accession>
<comment type="function">
    <text evidence="1">Plays a role in viral genome replication by driving entry of quiescent cells into the cell cycle. Stimulation of progression from G1 to S phase allows the virus to efficiently use the cellular DNA replicating machinery to achieve viral genome replication. E7 protein has both transforming and trans-activating activities. Induces the disassembly of the E2F1 transcription factor from RB1, with subsequent transcriptional activation of E2F1-regulated S-phase genes. Interferes with host histone deacetylation mediated by HDAC1 and HDAC2, leading to transcription activation. Also plays a role in the inhibition of both antiviral and antiproliferative functions of host interferon alpha. Interaction with host TMEM173/STING impairs the ability of TMEM173/STING to sense cytosolic DNA and promote the production of type I interferon (IFN-alpha and IFN-beta).</text>
</comment>
<comment type="subunit">
    <text evidence="1">Homodimer. Homooligomer. Interacts with host RB1; this interaction induces dissociation of RB1-E2F1 complex thereby disrupting RB1 activity. Interacts with host EP300; this interaction represses EP300 transcriptional activity. Interacts with protein E2; this interaction inhibits E7 oncogenic activity. Interacts with host TMEM173/STING; this interaction impairs the ability of TMEM173/STING to sense cytosolic DNA and promote the production of type I interferon (IFN-alpha and IFN-beta).</text>
</comment>
<comment type="subcellular location">
    <subcellularLocation>
        <location evidence="1">Host cytoplasm</location>
    </subcellularLocation>
    <subcellularLocation>
        <location evidence="1">Host nucleus</location>
    </subcellularLocation>
    <text evidence="1">Predominantly found in the host nucleus.</text>
</comment>
<comment type="domain">
    <text evidence="1">The E7 terminal domain is an intrinsically disordered domain, whose flexibility and conformational transitions confer target adaptability to the oncoprotein. It allows adaptation to a variety of protein targets and exposes the PEST degradation sequence that regulates its turnover in the cell.</text>
</comment>
<comment type="PTM">
    <text evidence="1">Highly phosphorylated.</text>
</comment>
<comment type="similarity">
    <text evidence="1">Belongs to the papillomaviridae E7 protein family.</text>
</comment>
<name>VE7_HPV21</name>
<protein>
    <recommendedName>
        <fullName evidence="1">Protein E7</fullName>
    </recommendedName>
</protein>
<reference key="1">
    <citation type="submission" date="1995-10" db="EMBL/GenBank/DDBJ databases">
        <authorList>
            <person name="Delius H."/>
        </authorList>
    </citation>
    <scope>NUCLEOTIDE SEQUENCE [GENOMIC DNA]</scope>
</reference>
<reference key="2">
    <citation type="journal article" date="2002" name="Rev. Med. Virol.">
        <title>Interactions of SV40 large T antigen and other viral proteins with retinoblastoma tumour suppressor.</title>
        <authorList>
            <person name="Lee C."/>
            <person name="Cho Y."/>
        </authorList>
    </citation>
    <scope>REVIEW</scope>
</reference>
<proteinExistence type="inferred from homology"/>